<proteinExistence type="inferred from homology"/>
<gene>
    <name evidence="1" type="primary">ytfE</name>
    <name type="ordered locus">YpsIP31758_3632</name>
</gene>
<accession>A7FMV8</accession>
<name>YTFE_YERP3</name>
<dbReference type="EMBL" id="CP000720">
    <property type="protein sequence ID" value="ABS45962.1"/>
    <property type="molecule type" value="Genomic_DNA"/>
</dbReference>
<dbReference type="RefSeq" id="WP_011191621.1">
    <property type="nucleotide sequence ID" value="NC_009708.1"/>
</dbReference>
<dbReference type="SMR" id="A7FMV8"/>
<dbReference type="KEGG" id="ypi:YpsIP31758_3632"/>
<dbReference type="HOGENOM" id="CLU_076075_2_0_6"/>
<dbReference type="Proteomes" id="UP000002412">
    <property type="component" value="Chromosome"/>
</dbReference>
<dbReference type="GO" id="GO:0005737">
    <property type="term" value="C:cytoplasm"/>
    <property type="evidence" value="ECO:0007669"/>
    <property type="project" value="UniProtKB-SubCell"/>
</dbReference>
<dbReference type="GO" id="GO:0046872">
    <property type="term" value="F:metal ion binding"/>
    <property type="evidence" value="ECO:0007669"/>
    <property type="project" value="UniProtKB-KW"/>
</dbReference>
<dbReference type="GO" id="GO:0030091">
    <property type="term" value="P:protein repair"/>
    <property type="evidence" value="ECO:0007669"/>
    <property type="project" value="UniProtKB-UniRule"/>
</dbReference>
<dbReference type="GO" id="GO:0051409">
    <property type="term" value="P:response to nitrosative stress"/>
    <property type="evidence" value="ECO:0007669"/>
    <property type="project" value="UniProtKB-UniRule"/>
</dbReference>
<dbReference type="GO" id="GO:0006979">
    <property type="term" value="P:response to oxidative stress"/>
    <property type="evidence" value="ECO:0007669"/>
    <property type="project" value="UniProtKB-UniRule"/>
</dbReference>
<dbReference type="CDD" id="cd12108">
    <property type="entry name" value="Hr-like"/>
    <property type="match status" value="1"/>
</dbReference>
<dbReference type="Gene3D" id="1.20.120.520">
    <property type="entry name" value="nmb1532 protein domain like"/>
    <property type="match status" value="1"/>
</dbReference>
<dbReference type="HAMAP" id="MF_01606">
    <property type="entry name" value="RIC_YtfE"/>
    <property type="match status" value="1"/>
</dbReference>
<dbReference type="InterPro" id="IPR023742">
    <property type="entry name" value="FeS-repair_YftE"/>
</dbReference>
<dbReference type="InterPro" id="IPR012312">
    <property type="entry name" value="Hemerythrin-like"/>
</dbReference>
<dbReference type="InterPro" id="IPR019903">
    <property type="entry name" value="RIC_family"/>
</dbReference>
<dbReference type="NCBIfam" id="TIGR03652">
    <property type="entry name" value="FeS_repair_RIC"/>
    <property type="match status" value="1"/>
</dbReference>
<dbReference type="NCBIfam" id="NF008221">
    <property type="entry name" value="PRK10992.1"/>
    <property type="match status" value="1"/>
</dbReference>
<dbReference type="PANTHER" id="PTHR36438">
    <property type="entry name" value="IRON-SULFUR CLUSTER REPAIR PROTEIN YTFE"/>
    <property type="match status" value="1"/>
</dbReference>
<dbReference type="PANTHER" id="PTHR36438:SF1">
    <property type="entry name" value="IRON-SULFUR CLUSTER REPAIR PROTEIN YTFE"/>
    <property type="match status" value="1"/>
</dbReference>
<dbReference type="Pfam" id="PF01814">
    <property type="entry name" value="Hemerythrin"/>
    <property type="match status" value="1"/>
</dbReference>
<dbReference type="Pfam" id="PF04405">
    <property type="entry name" value="ScdA_N"/>
    <property type="match status" value="1"/>
</dbReference>
<comment type="function">
    <text evidence="1">Di-iron-containing protein involved in the repair of iron-sulfur clusters damaged by oxidative and nitrosative stress conditions.</text>
</comment>
<comment type="subunit">
    <text evidence="1">Homodimer.</text>
</comment>
<comment type="subcellular location">
    <subcellularLocation>
        <location evidence="1">Cytoplasm</location>
    </subcellularLocation>
</comment>
<comment type="similarity">
    <text evidence="1">Belongs to the RIC family. YtfE subfamily.</text>
</comment>
<protein>
    <recommendedName>
        <fullName evidence="1">Iron-sulfur cluster repair protein YtfE</fullName>
    </recommendedName>
</protein>
<feature type="chain" id="PRO_1000069421" description="Iron-sulfur cluster repair protein YtfE">
    <location>
        <begin position="1"/>
        <end position="221"/>
    </location>
</feature>
<organism>
    <name type="scientific">Yersinia pseudotuberculosis serotype O:1b (strain IP 31758)</name>
    <dbReference type="NCBI Taxonomy" id="349747"/>
    <lineage>
        <taxon>Bacteria</taxon>
        <taxon>Pseudomonadati</taxon>
        <taxon>Pseudomonadota</taxon>
        <taxon>Gammaproteobacteria</taxon>
        <taxon>Enterobacterales</taxon>
        <taxon>Yersiniaceae</taxon>
        <taxon>Yersinia</taxon>
    </lineage>
</organism>
<reference key="1">
    <citation type="journal article" date="2007" name="PLoS Genet.">
        <title>The complete genome sequence of Yersinia pseudotuberculosis IP31758, the causative agent of Far East scarlet-like fever.</title>
        <authorList>
            <person name="Eppinger M."/>
            <person name="Rosovitz M.J."/>
            <person name="Fricke W.F."/>
            <person name="Rasko D.A."/>
            <person name="Kokorina G."/>
            <person name="Fayolle C."/>
            <person name="Lindler L.E."/>
            <person name="Carniel E."/>
            <person name="Ravel J."/>
        </authorList>
    </citation>
    <scope>NUCLEOTIDE SEQUENCE [LARGE SCALE GENOMIC DNA]</scope>
    <source>
        <strain>IP 31758</strain>
    </source>
</reference>
<evidence type="ECO:0000255" key="1">
    <source>
        <dbReference type="HAMAP-Rule" id="MF_01606"/>
    </source>
</evidence>
<sequence length="221" mass="25049">MDYRNQSLGALAIAIPRATKLFRQHQLDFCCGGKQTLLRAANKLNLDIDALEAQLSALQTEPHSSEDWQQQPLTNLISFIISRYHDRHREQLPELVLMAEKVERVHGDKPTCPRGLAAELSAILEELTQHMYKEEQILFPMIQRGMGSQASGPIFVMEAEHDAVGQQLDVVKQLTQNVTPPEGACNTWRALYTGINEFITDLMEHIHLENNLLFPRALRGE</sequence>
<keyword id="KW-0963">Cytoplasm</keyword>
<keyword id="KW-0408">Iron</keyword>
<keyword id="KW-0479">Metal-binding</keyword>
<keyword id="KW-0346">Stress response</keyword>